<organism>
    <name type="scientific">Xylella fastidiosa (strain M23)</name>
    <dbReference type="NCBI Taxonomy" id="405441"/>
    <lineage>
        <taxon>Bacteria</taxon>
        <taxon>Pseudomonadati</taxon>
        <taxon>Pseudomonadota</taxon>
        <taxon>Gammaproteobacteria</taxon>
        <taxon>Lysobacterales</taxon>
        <taxon>Lysobacteraceae</taxon>
        <taxon>Xylella</taxon>
    </lineage>
</organism>
<comment type="function">
    <text evidence="1">Protease subunit of a proteasome-like degradation complex believed to be a general protein degrading machinery.</text>
</comment>
<comment type="catalytic activity">
    <reaction evidence="1">
        <text>ATP-dependent cleavage of peptide bonds with broad specificity.</text>
        <dbReference type="EC" id="3.4.25.2"/>
    </reaction>
</comment>
<comment type="activity regulation">
    <text evidence="1">Allosterically activated by HslU binding.</text>
</comment>
<comment type="subunit">
    <text evidence="1">A double ring-shaped homohexamer of HslV is capped on each side by a ring-shaped HslU homohexamer. The assembly of the HslU/HslV complex is dependent on binding of ATP.</text>
</comment>
<comment type="subcellular location">
    <subcellularLocation>
        <location evidence="1">Cytoplasm</location>
    </subcellularLocation>
</comment>
<comment type="similarity">
    <text evidence="1">Belongs to the peptidase T1B family. HslV subfamily.</text>
</comment>
<accession>B2IA19</accession>
<proteinExistence type="inferred from homology"/>
<gene>
    <name evidence="1" type="primary">hslV</name>
    <name type="ordered locus">XfasM23_0737</name>
</gene>
<name>HSLV_XYLF2</name>
<reference key="1">
    <citation type="journal article" date="2010" name="J. Bacteriol.">
        <title>Whole genome sequences of two Xylella fastidiosa strains (M12 and M23) causing almond leaf scorch disease in California.</title>
        <authorList>
            <person name="Chen J."/>
            <person name="Xie G."/>
            <person name="Han S."/>
            <person name="Chertkov O."/>
            <person name="Sims D."/>
            <person name="Civerolo E.L."/>
        </authorList>
    </citation>
    <scope>NUCLEOTIDE SEQUENCE [LARGE SCALE GENOMIC DNA]</scope>
    <source>
        <strain>M23</strain>
    </source>
</reference>
<sequence length="183" mass="19366">MESSQMSNVFHATTIVCVRRGDKVAIAGDGQVTLGHTVMKSNARKVRRLGRDGQVLAGFAGAAADAFTLFELFEAKLEKHGQLSRAAVELAKDWRTERRLGKLEALLVVADKETSLVISGTGDVIEPEDGIVAIGSGGSYALSAARALMAHTALDARTIATEAIGIAGNICIYTNRNVVVDEL</sequence>
<feature type="chain" id="PRO_1000192689" description="ATP-dependent protease subunit HslV">
    <location>
        <begin position="1"/>
        <end position="183"/>
    </location>
</feature>
<feature type="active site" evidence="1">
    <location>
        <position position="13"/>
    </location>
</feature>
<feature type="binding site" evidence="1">
    <location>
        <position position="168"/>
    </location>
    <ligand>
        <name>Na(+)</name>
        <dbReference type="ChEBI" id="CHEBI:29101"/>
    </ligand>
</feature>
<feature type="binding site" evidence="1">
    <location>
        <position position="171"/>
    </location>
    <ligand>
        <name>Na(+)</name>
        <dbReference type="ChEBI" id="CHEBI:29101"/>
    </ligand>
</feature>
<feature type="binding site" evidence="1">
    <location>
        <position position="174"/>
    </location>
    <ligand>
        <name>Na(+)</name>
        <dbReference type="ChEBI" id="CHEBI:29101"/>
    </ligand>
</feature>
<evidence type="ECO:0000255" key="1">
    <source>
        <dbReference type="HAMAP-Rule" id="MF_00248"/>
    </source>
</evidence>
<dbReference type="EC" id="3.4.25.2" evidence="1"/>
<dbReference type="EMBL" id="CP001011">
    <property type="protein sequence ID" value="ACB92178.1"/>
    <property type="molecule type" value="Genomic_DNA"/>
</dbReference>
<dbReference type="RefSeq" id="WP_011097750.1">
    <property type="nucleotide sequence ID" value="NC_010577.1"/>
</dbReference>
<dbReference type="SMR" id="B2IA19"/>
<dbReference type="MEROPS" id="T01.006"/>
<dbReference type="GeneID" id="93904481"/>
<dbReference type="KEGG" id="xfn:XfasM23_0737"/>
<dbReference type="HOGENOM" id="CLU_093872_1_0_6"/>
<dbReference type="Proteomes" id="UP000001698">
    <property type="component" value="Chromosome"/>
</dbReference>
<dbReference type="GO" id="GO:0009376">
    <property type="term" value="C:HslUV protease complex"/>
    <property type="evidence" value="ECO:0007669"/>
    <property type="project" value="UniProtKB-UniRule"/>
</dbReference>
<dbReference type="GO" id="GO:0005839">
    <property type="term" value="C:proteasome core complex"/>
    <property type="evidence" value="ECO:0007669"/>
    <property type="project" value="InterPro"/>
</dbReference>
<dbReference type="GO" id="GO:0046872">
    <property type="term" value="F:metal ion binding"/>
    <property type="evidence" value="ECO:0007669"/>
    <property type="project" value="UniProtKB-KW"/>
</dbReference>
<dbReference type="GO" id="GO:0004298">
    <property type="term" value="F:threonine-type endopeptidase activity"/>
    <property type="evidence" value="ECO:0007669"/>
    <property type="project" value="UniProtKB-KW"/>
</dbReference>
<dbReference type="GO" id="GO:0051603">
    <property type="term" value="P:proteolysis involved in protein catabolic process"/>
    <property type="evidence" value="ECO:0007669"/>
    <property type="project" value="InterPro"/>
</dbReference>
<dbReference type="CDD" id="cd01913">
    <property type="entry name" value="protease_HslV"/>
    <property type="match status" value="1"/>
</dbReference>
<dbReference type="Gene3D" id="3.60.20.10">
    <property type="entry name" value="Glutamine Phosphoribosylpyrophosphate, subunit 1, domain 1"/>
    <property type="match status" value="1"/>
</dbReference>
<dbReference type="HAMAP" id="MF_00248">
    <property type="entry name" value="HslV"/>
    <property type="match status" value="1"/>
</dbReference>
<dbReference type="InterPro" id="IPR022281">
    <property type="entry name" value="ATP-dep_Prtase_HsIV_su"/>
</dbReference>
<dbReference type="InterPro" id="IPR029055">
    <property type="entry name" value="Ntn_hydrolases_N"/>
</dbReference>
<dbReference type="InterPro" id="IPR001353">
    <property type="entry name" value="Proteasome_sua/b"/>
</dbReference>
<dbReference type="InterPro" id="IPR023333">
    <property type="entry name" value="Proteasome_suB-type"/>
</dbReference>
<dbReference type="NCBIfam" id="TIGR03692">
    <property type="entry name" value="ATP_dep_HslV"/>
    <property type="match status" value="1"/>
</dbReference>
<dbReference type="NCBIfam" id="NF003964">
    <property type="entry name" value="PRK05456.1"/>
    <property type="match status" value="1"/>
</dbReference>
<dbReference type="PANTHER" id="PTHR32194:SF0">
    <property type="entry name" value="ATP-DEPENDENT PROTEASE SUBUNIT HSLV"/>
    <property type="match status" value="1"/>
</dbReference>
<dbReference type="PANTHER" id="PTHR32194">
    <property type="entry name" value="METALLOPROTEASE TLDD"/>
    <property type="match status" value="1"/>
</dbReference>
<dbReference type="Pfam" id="PF00227">
    <property type="entry name" value="Proteasome"/>
    <property type="match status" value="1"/>
</dbReference>
<dbReference type="PIRSF" id="PIRSF039093">
    <property type="entry name" value="HslV"/>
    <property type="match status" value="1"/>
</dbReference>
<dbReference type="SUPFAM" id="SSF56235">
    <property type="entry name" value="N-terminal nucleophile aminohydrolases (Ntn hydrolases)"/>
    <property type="match status" value="1"/>
</dbReference>
<dbReference type="PROSITE" id="PS51476">
    <property type="entry name" value="PROTEASOME_BETA_2"/>
    <property type="match status" value="1"/>
</dbReference>
<protein>
    <recommendedName>
        <fullName evidence="1">ATP-dependent protease subunit HslV</fullName>
        <ecNumber evidence="1">3.4.25.2</ecNumber>
    </recommendedName>
</protein>
<keyword id="KW-0021">Allosteric enzyme</keyword>
<keyword id="KW-0963">Cytoplasm</keyword>
<keyword id="KW-0378">Hydrolase</keyword>
<keyword id="KW-0479">Metal-binding</keyword>
<keyword id="KW-0645">Protease</keyword>
<keyword id="KW-0915">Sodium</keyword>
<keyword id="KW-0888">Threonine protease</keyword>